<sequence>MEHAVGKVTFKITLTSDPKLPFKVLSVPESTPFTAVLKFAAEEFKVPAATSAIITNDGVGINPTQSAGNIFLKHGSELRLIPRDRVGYCE</sequence>
<evidence type="ECO:0000250" key="1"/>
<evidence type="ECO:0000255" key="2"/>
<evidence type="ECO:0000305" key="3"/>
<feature type="chain" id="PRO_0000392013" description="Ubiquitin-fold modifier 1">
    <location>
        <begin position="1"/>
        <end position="87"/>
    </location>
</feature>
<feature type="propeptide" id="PRO_0000392014" description="Removed in mature form" evidence="1">
    <location>
        <begin position="88"/>
        <end position="90"/>
    </location>
</feature>
<feature type="cross-link" description="Glycyl lysine isopeptide (Gly-Lys) (interchain with K-? in acceptor proteins)" evidence="2">
    <location>
        <position position="87"/>
    </location>
</feature>
<gene>
    <name type="ORF">Bm1_46275</name>
</gene>
<reference key="1">
    <citation type="journal article" date="2007" name="Science">
        <title>Draft genome of the filarial nematode parasite Brugia malayi.</title>
        <authorList>
            <person name="Ghedin E."/>
            <person name="Wang S."/>
            <person name="Spiro D."/>
            <person name="Caler E."/>
            <person name="Zhao Q."/>
            <person name="Crabtree J."/>
            <person name="Allen J.E."/>
            <person name="Delcher A.L."/>
            <person name="Guiliano D.B."/>
            <person name="Miranda-Saavedra D."/>
            <person name="Angiuoli S.V."/>
            <person name="Creasy T."/>
            <person name="Amedeo P."/>
            <person name="Haas B."/>
            <person name="El-Sayed N.M."/>
            <person name="Wortman J.R."/>
            <person name="Feldblyum T."/>
            <person name="Tallon L."/>
            <person name="Schatz M."/>
            <person name="Shumway M."/>
            <person name="Koo H."/>
            <person name="Salzberg S.L."/>
            <person name="Schobel S."/>
            <person name="Pertea M."/>
            <person name="Pop M."/>
            <person name="White O."/>
            <person name="Barton G.J."/>
            <person name="Carlow C.K.S."/>
            <person name="Crawford M.J."/>
            <person name="Daub J."/>
            <person name="Dimmic M.W."/>
            <person name="Estes C.F."/>
            <person name="Foster J.M."/>
            <person name="Ganatra M."/>
            <person name="Gregory W.F."/>
            <person name="Johnson N.M."/>
            <person name="Jin J."/>
            <person name="Komuniecki R."/>
            <person name="Korf I."/>
            <person name="Kumar S."/>
            <person name="Laney S."/>
            <person name="Li B.-W."/>
            <person name="Li W."/>
            <person name="Lindblom T.H."/>
            <person name="Lustigman S."/>
            <person name="Ma D."/>
            <person name="Maina C.V."/>
            <person name="Martin D.M."/>
            <person name="McCarter J.P."/>
            <person name="McReynolds L."/>
            <person name="Mitreva M."/>
            <person name="Nutman T.B."/>
            <person name="Parkinson J."/>
            <person name="Peregrin-Alvarez J.M."/>
            <person name="Poole C."/>
            <person name="Ren Q."/>
            <person name="Saunders L."/>
            <person name="Sluder A.E."/>
            <person name="Smith K."/>
            <person name="Stanke M."/>
            <person name="Unnasch T.R."/>
            <person name="Ware J."/>
            <person name="Wei A.D."/>
            <person name="Weil G."/>
            <person name="Williams D.J."/>
            <person name="Zhang Y."/>
            <person name="Williams S.A."/>
            <person name="Fraser-Liggett C."/>
            <person name="Slatko B."/>
            <person name="Blaxter M.L."/>
            <person name="Scott A.L."/>
        </authorList>
    </citation>
    <scope>NUCLEOTIDE SEQUENCE [LARGE SCALE GENOMIC DNA]</scope>
</reference>
<name>UFM1_BRUMA</name>
<dbReference type="EMBL" id="DS239419">
    <property type="protein sequence ID" value="EDP30472.1"/>
    <property type="molecule type" value="Genomic_DNA"/>
</dbReference>
<dbReference type="RefSeq" id="XP_001900717.1">
    <property type="nucleotide sequence ID" value="XM_001900682.1"/>
</dbReference>
<dbReference type="SMR" id="A8Q8M5"/>
<dbReference type="FunCoup" id="A8Q8M5">
    <property type="interactions" value="1306"/>
</dbReference>
<dbReference type="STRING" id="6279.A8Q8M5"/>
<dbReference type="GeneID" id="6104137"/>
<dbReference type="KEGG" id="bmy:BM_BM7521"/>
<dbReference type="CTD" id="6104137"/>
<dbReference type="WormBase" id="Bm7521b">
    <property type="protein sequence ID" value="BM39646"/>
    <property type="gene ID" value="WBGene00227782"/>
    <property type="gene designation" value="Bma-ufm-1"/>
</dbReference>
<dbReference type="HOGENOM" id="CLU_175114_0_0_1"/>
<dbReference type="InParanoid" id="A8Q8M5"/>
<dbReference type="OMA" id="MEHAVGK"/>
<dbReference type="OrthoDB" id="284357at2759"/>
<dbReference type="Proteomes" id="UP000006672">
    <property type="component" value="Unassembled WGS sequence"/>
</dbReference>
<dbReference type="GO" id="GO:0005737">
    <property type="term" value="C:cytoplasm"/>
    <property type="evidence" value="ECO:0007669"/>
    <property type="project" value="TreeGrafter"/>
</dbReference>
<dbReference type="GO" id="GO:0005634">
    <property type="term" value="C:nucleus"/>
    <property type="evidence" value="ECO:0007669"/>
    <property type="project" value="TreeGrafter"/>
</dbReference>
<dbReference type="GO" id="GO:1990592">
    <property type="term" value="P:protein K69-linked ufmylation"/>
    <property type="evidence" value="ECO:0007669"/>
    <property type="project" value="TreeGrafter"/>
</dbReference>
<dbReference type="CDD" id="cd01766">
    <property type="entry name" value="Ubl_UFM1"/>
    <property type="match status" value="1"/>
</dbReference>
<dbReference type="FunFam" id="3.10.20.90:FF:000044">
    <property type="entry name" value="Ubiquitin-fold modifier 1"/>
    <property type="match status" value="1"/>
</dbReference>
<dbReference type="Gene3D" id="3.10.20.90">
    <property type="entry name" value="Phosphatidylinositol 3-kinase Catalytic Subunit, Chain A, domain 1"/>
    <property type="match status" value="1"/>
</dbReference>
<dbReference type="InterPro" id="IPR029071">
    <property type="entry name" value="Ubiquitin-like_domsf"/>
</dbReference>
<dbReference type="InterPro" id="IPR005375">
    <property type="entry name" value="UFM1"/>
</dbReference>
<dbReference type="PANTHER" id="PTHR15825">
    <property type="entry name" value="UBIQUITIN-FOLD MODIFIER 1"/>
    <property type="match status" value="1"/>
</dbReference>
<dbReference type="PANTHER" id="PTHR15825:SF0">
    <property type="entry name" value="UBIQUITIN-FOLD MODIFIER 1"/>
    <property type="match status" value="1"/>
</dbReference>
<dbReference type="Pfam" id="PF03671">
    <property type="entry name" value="Ufm1"/>
    <property type="match status" value="1"/>
</dbReference>
<dbReference type="PIRSF" id="PIRSF038027">
    <property type="entry name" value="Ubiquitin-like_Ufm1"/>
    <property type="match status" value="1"/>
</dbReference>
<dbReference type="SUPFAM" id="SSF54236">
    <property type="entry name" value="Ubiquitin-like"/>
    <property type="match status" value="1"/>
</dbReference>
<comment type="function">
    <text evidence="1">Ubiquitin-like modifier protein which binds to a number of as yet unidentified target proteins.</text>
</comment>
<comment type="similarity">
    <text evidence="3">Belongs to the UFM1 family.</text>
</comment>
<organism>
    <name type="scientific">Brugia malayi</name>
    <name type="common">Filarial nematode worm</name>
    <dbReference type="NCBI Taxonomy" id="6279"/>
    <lineage>
        <taxon>Eukaryota</taxon>
        <taxon>Metazoa</taxon>
        <taxon>Ecdysozoa</taxon>
        <taxon>Nematoda</taxon>
        <taxon>Chromadorea</taxon>
        <taxon>Rhabditida</taxon>
        <taxon>Spirurina</taxon>
        <taxon>Spiruromorpha</taxon>
        <taxon>Filarioidea</taxon>
        <taxon>Onchocercidae</taxon>
        <taxon>Brugia</taxon>
    </lineage>
</organism>
<proteinExistence type="inferred from homology"/>
<accession>A8Q8M5</accession>
<protein>
    <recommendedName>
        <fullName>Ubiquitin-fold modifier 1</fullName>
    </recommendedName>
</protein>
<keyword id="KW-1017">Isopeptide bond</keyword>
<keyword id="KW-1185">Reference proteome</keyword>
<keyword id="KW-0833">Ubl conjugation pathway</keyword>